<protein>
    <recommendedName>
        <fullName>Chalcone synthase 5</fullName>
        <ecNumber>2.3.1.74</ecNumber>
    </recommendedName>
    <alternativeName>
        <fullName>Naringenin-chalcone synthase 5</fullName>
    </alternativeName>
</protein>
<organism>
    <name type="scientific">Sorghum bicolor</name>
    <name type="common">Sorghum</name>
    <name type="synonym">Sorghum vulgare</name>
    <dbReference type="NCBI Taxonomy" id="4558"/>
    <lineage>
        <taxon>Eukaryota</taxon>
        <taxon>Viridiplantae</taxon>
        <taxon>Streptophyta</taxon>
        <taxon>Embryophyta</taxon>
        <taxon>Tracheophyta</taxon>
        <taxon>Spermatophyta</taxon>
        <taxon>Magnoliopsida</taxon>
        <taxon>Liliopsida</taxon>
        <taxon>Poales</taxon>
        <taxon>Poaceae</taxon>
        <taxon>PACMAD clade</taxon>
        <taxon>Panicoideae</taxon>
        <taxon>Andropogonodae</taxon>
        <taxon>Andropogoneae</taxon>
        <taxon>Sorghinae</taxon>
        <taxon>Sorghum</taxon>
    </lineage>
</organism>
<feature type="chain" id="PRO_0000216059" description="Chalcone synthase 5">
    <location>
        <begin position="1"/>
        <end position="401"/>
    </location>
</feature>
<feature type="active site" evidence="1">
    <location>
        <position position="168"/>
    </location>
</feature>
<evidence type="ECO:0000255" key="1">
    <source>
        <dbReference type="PROSITE-ProRule" id="PRU10023"/>
    </source>
</evidence>
<evidence type="ECO:0000305" key="2"/>
<comment type="function">
    <text>The primary product of this enzyme is 4,2',4',6'-tetrahydroxychalcone (also termed naringenin-chalcone or chalcone) which can under specific conditions spontaneously isomerize into naringenin.</text>
</comment>
<comment type="catalytic activity">
    <reaction evidence="1">
        <text>(E)-4-coumaroyl-CoA + 3 malonyl-CoA + 3 H(+) = 2',4,4',6'-tetrahydroxychalcone + 3 CO2 + 4 CoA</text>
        <dbReference type="Rhea" id="RHEA:11128"/>
        <dbReference type="ChEBI" id="CHEBI:15378"/>
        <dbReference type="ChEBI" id="CHEBI:15413"/>
        <dbReference type="ChEBI" id="CHEBI:16526"/>
        <dbReference type="ChEBI" id="CHEBI:57287"/>
        <dbReference type="ChEBI" id="CHEBI:57384"/>
        <dbReference type="ChEBI" id="CHEBI:85008"/>
        <dbReference type="EC" id="2.3.1.74"/>
    </reaction>
</comment>
<comment type="pathway">
    <text>Secondary metabolite biosynthesis; flavonoid biosynthesis.</text>
</comment>
<comment type="similarity">
    <text evidence="2">Belongs to the thiolase-like superfamily. Chalcone/stilbene synthases family.</text>
</comment>
<keyword id="KW-0012">Acyltransferase</keyword>
<keyword id="KW-0284">Flavonoid biosynthesis</keyword>
<keyword id="KW-0808">Transferase</keyword>
<gene>
    <name type="primary">CHS5</name>
</gene>
<reference key="1">
    <citation type="submission" date="1999-05" db="EMBL/GenBank/DDBJ databases">
        <title>Molecular cloning of chalcone synthase genes from sorghum.</title>
        <authorList>
            <person name="Lo S.-C.C."/>
            <person name="Nicholson R.L."/>
        </authorList>
    </citation>
    <scope>NUCLEOTIDE SEQUENCE [GENOMIC DNA]</scope>
    <source>
        <strain>cv. BTx623</strain>
    </source>
</reference>
<sequence length="401" mass="43699">MAAATVTVEEVRKAQRATGPATVLAIGTATPANCVHQADYPDYYFRITKSEHMTELKEKFKRMCDKSQIRKRYMHLTEEYLAENPNMCAYMAPSLDARQDIVVVEVPKLGKAAAHKAIKEWGQPKSKITHLVFCTTSGVDMPGADYQLTKMLGLRPSVNRLMMYQQGCFAGGTVLRVAKDLAENNRGARVLVVCSEITAVTFRGPSESHLDSMVGQALFGDGAAAVIVGADPDERVERPLFQLVSASQTILPDSEGAIDGHLREVGLTFHLLKDVPGLISKNIERSLEEAFKPLGITDYNSIFWVAHPGGPAILDQVEAKVGLEKERMRATRHVLSEYGNMSSACVLFILDEMRKRSAEDGQATTGEGFDWGVLFGFGPGLTVETVVLHSVPITTGAAITA</sequence>
<accession>Q9SBL4</accession>
<proteinExistence type="inferred from homology"/>
<dbReference type="EC" id="2.3.1.74"/>
<dbReference type="EMBL" id="AF152552">
    <property type="protein sequence ID" value="AAD41877.1"/>
    <property type="molecule type" value="Genomic_DNA"/>
</dbReference>
<dbReference type="SMR" id="Q9SBL4"/>
<dbReference type="eggNOG" id="ENOG502QRSY">
    <property type="taxonomic scope" value="Eukaryota"/>
</dbReference>
<dbReference type="UniPathway" id="UPA00154"/>
<dbReference type="ExpressionAtlas" id="Q9SBL4">
    <property type="expression patterns" value="baseline and differential"/>
</dbReference>
<dbReference type="GO" id="GO:0016210">
    <property type="term" value="F:naringenin-chalcone synthase activity"/>
    <property type="evidence" value="ECO:0007669"/>
    <property type="project" value="UniProtKB-EC"/>
</dbReference>
<dbReference type="GO" id="GO:0009813">
    <property type="term" value="P:flavonoid biosynthetic process"/>
    <property type="evidence" value="ECO:0007669"/>
    <property type="project" value="UniProtKB-UniPathway"/>
</dbReference>
<dbReference type="CDD" id="cd00831">
    <property type="entry name" value="CHS_like"/>
    <property type="match status" value="1"/>
</dbReference>
<dbReference type="FunFam" id="3.40.47.10:FF:000014">
    <property type="entry name" value="Chalcone synthase 1"/>
    <property type="match status" value="1"/>
</dbReference>
<dbReference type="FunFam" id="3.40.47.10:FF:000025">
    <property type="entry name" value="Chalcone synthase 2"/>
    <property type="match status" value="1"/>
</dbReference>
<dbReference type="Gene3D" id="3.40.47.10">
    <property type="match status" value="2"/>
</dbReference>
<dbReference type="InterPro" id="IPR012328">
    <property type="entry name" value="Chalcone/stilbene_synt_C"/>
</dbReference>
<dbReference type="InterPro" id="IPR001099">
    <property type="entry name" value="Chalcone/stilbene_synt_N"/>
</dbReference>
<dbReference type="InterPro" id="IPR018088">
    <property type="entry name" value="Chalcone/stilbene_synthase_AS"/>
</dbReference>
<dbReference type="InterPro" id="IPR011141">
    <property type="entry name" value="Polyketide_synthase_type-III"/>
</dbReference>
<dbReference type="InterPro" id="IPR016039">
    <property type="entry name" value="Thiolase-like"/>
</dbReference>
<dbReference type="PANTHER" id="PTHR11877:SF14">
    <property type="entry name" value="CHALCONE SYNTHASE"/>
    <property type="match status" value="1"/>
</dbReference>
<dbReference type="PANTHER" id="PTHR11877">
    <property type="entry name" value="HYDROXYMETHYLGLUTARYL-COA SYNTHASE"/>
    <property type="match status" value="1"/>
</dbReference>
<dbReference type="Pfam" id="PF02797">
    <property type="entry name" value="Chal_sti_synt_C"/>
    <property type="match status" value="1"/>
</dbReference>
<dbReference type="Pfam" id="PF00195">
    <property type="entry name" value="Chal_sti_synt_N"/>
    <property type="match status" value="1"/>
</dbReference>
<dbReference type="PIRSF" id="PIRSF000451">
    <property type="entry name" value="PKS_III"/>
    <property type="match status" value="1"/>
</dbReference>
<dbReference type="SUPFAM" id="SSF53901">
    <property type="entry name" value="Thiolase-like"/>
    <property type="match status" value="2"/>
</dbReference>
<dbReference type="PROSITE" id="PS00441">
    <property type="entry name" value="CHALCONE_SYNTH"/>
    <property type="match status" value="1"/>
</dbReference>
<name>CHS5_SORBI</name>